<organism>
    <name type="scientific">Streptococcus agalactiae serotype V (strain ATCC BAA-611 / 2603 V/R)</name>
    <dbReference type="NCBI Taxonomy" id="208435"/>
    <lineage>
        <taxon>Bacteria</taxon>
        <taxon>Bacillati</taxon>
        <taxon>Bacillota</taxon>
        <taxon>Bacilli</taxon>
        <taxon>Lactobacillales</taxon>
        <taxon>Streptococcaceae</taxon>
        <taxon>Streptococcus</taxon>
    </lineage>
</organism>
<gene>
    <name evidence="1" type="primary">rplD</name>
    <name type="ordered locus">SAG0059</name>
</gene>
<accession>Q8E2D0</accession>
<evidence type="ECO:0000255" key="1">
    <source>
        <dbReference type="HAMAP-Rule" id="MF_01328"/>
    </source>
</evidence>
<evidence type="ECO:0000256" key="2">
    <source>
        <dbReference type="SAM" id="MobiDB-lite"/>
    </source>
</evidence>
<evidence type="ECO:0000305" key="3"/>
<dbReference type="EMBL" id="AE009948">
    <property type="protein sequence ID" value="AAM98967.1"/>
    <property type="molecule type" value="Genomic_DNA"/>
</dbReference>
<dbReference type="RefSeq" id="NP_687095.1">
    <property type="nucleotide sequence ID" value="NC_004116.1"/>
</dbReference>
<dbReference type="RefSeq" id="WP_000024418.1">
    <property type="nucleotide sequence ID" value="NC_004116.1"/>
</dbReference>
<dbReference type="SMR" id="Q8E2D0"/>
<dbReference type="STRING" id="208435.SAG0059"/>
<dbReference type="GeneID" id="66885019"/>
<dbReference type="KEGG" id="sag:SAG0059"/>
<dbReference type="PATRIC" id="fig|208435.3.peg.58"/>
<dbReference type="HOGENOM" id="CLU_041575_5_2_9"/>
<dbReference type="OrthoDB" id="9803201at2"/>
<dbReference type="Proteomes" id="UP000000821">
    <property type="component" value="Chromosome"/>
</dbReference>
<dbReference type="GO" id="GO:1990904">
    <property type="term" value="C:ribonucleoprotein complex"/>
    <property type="evidence" value="ECO:0007669"/>
    <property type="project" value="UniProtKB-KW"/>
</dbReference>
<dbReference type="GO" id="GO:0005840">
    <property type="term" value="C:ribosome"/>
    <property type="evidence" value="ECO:0007669"/>
    <property type="project" value="UniProtKB-KW"/>
</dbReference>
<dbReference type="GO" id="GO:0019843">
    <property type="term" value="F:rRNA binding"/>
    <property type="evidence" value="ECO:0007669"/>
    <property type="project" value="UniProtKB-UniRule"/>
</dbReference>
<dbReference type="GO" id="GO:0003735">
    <property type="term" value="F:structural constituent of ribosome"/>
    <property type="evidence" value="ECO:0007669"/>
    <property type="project" value="InterPro"/>
</dbReference>
<dbReference type="GO" id="GO:0006412">
    <property type="term" value="P:translation"/>
    <property type="evidence" value="ECO:0007669"/>
    <property type="project" value="UniProtKB-UniRule"/>
</dbReference>
<dbReference type="FunFam" id="3.40.1370.10:FF:000003">
    <property type="entry name" value="50S ribosomal protein L4"/>
    <property type="match status" value="1"/>
</dbReference>
<dbReference type="Gene3D" id="3.40.1370.10">
    <property type="match status" value="1"/>
</dbReference>
<dbReference type="HAMAP" id="MF_01328_B">
    <property type="entry name" value="Ribosomal_uL4_B"/>
    <property type="match status" value="1"/>
</dbReference>
<dbReference type="InterPro" id="IPR002136">
    <property type="entry name" value="Ribosomal_uL4"/>
</dbReference>
<dbReference type="InterPro" id="IPR013005">
    <property type="entry name" value="Ribosomal_uL4-like"/>
</dbReference>
<dbReference type="InterPro" id="IPR023574">
    <property type="entry name" value="Ribosomal_uL4_dom_sf"/>
</dbReference>
<dbReference type="NCBIfam" id="TIGR03953">
    <property type="entry name" value="rplD_bact"/>
    <property type="match status" value="1"/>
</dbReference>
<dbReference type="PANTHER" id="PTHR10746">
    <property type="entry name" value="50S RIBOSOMAL PROTEIN L4"/>
    <property type="match status" value="1"/>
</dbReference>
<dbReference type="PANTHER" id="PTHR10746:SF6">
    <property type="entry name" value="LARGE RIBOSOMAL SUBUNIT PROTEIN UL4M"/>
    <property type="match status" value="1"/>
</dbReference>
<dbReference type="Pfam" id="PF00573">
    <property type="entry name" value="Ribosomal_L4"/>
    <property type="match status" value="1"/>
</dbReference>
<dbReference type="SUPFAM" id="SSF52166">
    <property type="entry name" value="Ribosomal protein L4"/>
    <property type="match status" value="1"/>
</dbReference>
<protein>
    <recommendedName>
        <fullName evidence="1">Large ribosomal subunit protein uL4</fullName>
    </recommendedName>
    <alternativeName>
        <fullName evidence="3">50S ribosomal protein L4</fullName>
    </alternativeName>
</protein>
<comment type="function">
    <text evidence="1">One of the primary rRNA binding proteins, this protein initially binds near the 5'-end of the 23S rRNA. It is important during the early stages of 50S assembly. It makes multiple contacts with different domains of the 23S rRNA in the assembled 50S subunit and ribosome.</text>
</comment>
<comment type="function">
    <text evidence="1">Forms part of the polypeptide exit tunnel.</text>
</comment>
<comment type="subunit">
    <text evidence="1">Part of the 50S ribosomal subunit.</text>
</comment>
<comment type="similarity">
    <text evidence="1">Belongs to the universal ribosomal protein uL4 family.</text>
</comment>
<keyword id="KW-1185">Reference proteome</keyword>
<keyword id="KW-0687">Ribonucleoprotein</keyword>
<keyword id="KW-0689">Ribosomal protein</keyword>
<keyword id="KW-0694">RNA-binding</keyword>
<keyword id="KW-0699">rRNA-binding</keyword>
<feature type="chain" id="PRO_0000129285" description="Large ribosomal subunit protein uL4">
    <location>
        <begin position="1"/>
        <end position="207"/>
    </location>
</feature>
<feature type="region of interest" description="Disordered" evidence="2">
    <location>
        <begin position="49"/>
        <end position="78"/>
    </location>
</feature>
<reference key="1">
    <citation type="journal article" date="2002" name="Proc. Natl. Acad. Sci. U.S.A.">
        <title>Complete genome sequence and comparative genomic analysis of an emerging human pathogen, serotype V Streptococcus agalactiae.</title>
        <authorList>
            <person name="Tettelin H."/>
            <person name="Masignani V."/>
            <person name="Cieslewicz M.J."/>
            <person name="Eisen J.A."/>
            <person name="Peterson S.N."/>
            <person name="Wessels M.R."/>
            <person name="Paulsen I.T."/>
            <person name="Nelson K.E."/>
            <person name="Margarit I."/>
            <person name="Read T.D."/>
            <person name="Madoff L.C."/>
            <person name="Wolf A.M."/>
            <person name="Beanan M.J."/>
            <person name="Brinkac L.M."/>
            <person name="Daugherty S.C."/>
            <person name="DeBoy R.T."/>
            <person name="Durkin A.S."/>
            <person name="Kolonay J.F."/>
            <person name="Madupu R."/>
            <person name="Lewis M.R."/>
            <person name="Radune D."/>
            <person name="Fedorova N.B."/>
            <person name="Scanlan D."/>
            <person name="Khouri H.M."/>
            <person name="Mulligan S."/>
            <person name="Carty H.A."/>
            <person name="Cline R.T."/>
            <person name="Van Aken S.E."/>
            <person name="Gill J."/>
            <person name="Scarselli M."/>
            <person name="Mora M."/>
            <person name="Iacobini E.T."/>
            <person name="Brettoni C."/>
            <person name="Galli G."/>
            <person name="Mariani M."/>
            <person name="Vegni F."/>
            <person name="Maione D."/>
            <person name="Rinaudo D."/>
            <person name="Rappuoli R."/>
            <person name="Telford J.L."/>
            <person name="Kasper D.L."/>
            <person name="Grandi G."/>
            <person name="Fraser C.M."/>
        </authorList>
    </citation>
    <scope>NUCLEOTIDE SEQUENCE [LARGE SCALE GENOMIC DNA]</scope>
    <source>
        <strain>ATCC BAA-611 / 2603 V/R</strain>
    </source>
</reference>
<sequence>MANVKLFDQTGKEVSSVELNEAIFGIEPNESVVFDVVISQRASLRQGTHAVKNRSAVSGGGRKPWRQKGTGRARQGSIRSPQWRGGGVVFGPTPRSYGYKLPQKVRRLALKSVYSAKVAEDKFVAVENLSFAAPKTAEFASVLSALSIDSKVLVILEEGNEFAALSARNLPNVTVATATTASVLDIVNADKLLVTKEAISTIEGVLA</sequence>
<name>RL4_STRA5</name>
<proteinExistence type="inferred from homology"/>